<protein>
    <recommendedName>
        <fullName>Haptoglobin</fullName>
    </recommendedName>
    <alternativeName>
        <fullName>Zonulin</fullName>
    </alternativeName>
    <component>
        <recommendedName>
            <fullName>Haptoglobin alpha chain</fullName>
        </recommendedName>
    </component>
    <component>
        <recommendedName>
            <fullName>Haptoglobin beta chain</fullName>
        </recommendedName>
    </component>
</protein>
<organism>
    <name type="scientific">Homo sapiens</name>
    <name type="common">Human</name>
    <dbReference type="NCBI Taxonomy" id="9606"/>
    <lineage>
        <taxon>Eukaryota</taxon>
        <taxon>Metazoa</taxon>
        <taxon>Chordata</taxon>
        <taxon>Craniata</taxon>
        <taxon>Vertebrata</taxon>
        <taxon>Euteleostomi</taxon>
        <taxon>Mammalia</taxon>
        <taxon>Eutheria</taxon>
        <taxon>Euarchontoglires</taxon>
        <taxon>Primates</taxon>
        <taxon>Haplorrhini</taxon>
        <taxon>Catarrhini</taxon>
        <taxon>Hominidae</taxon>
        <taxon>Homo</taxon>
    </lineage>
</organism>
<dbReference type="EMBL" id="K00422">
    <property type="protein sequence ID" value="AAA52687.1"/>
    <property type="molecule type" value="mRNA"/>
</dbReference>
<dbReference type="EMBL" id="K01763">
    <property type="protein sequence ID" value="AAA52684.1"/>
    <property type="molecule type" value="mRNA"/>
</dbReference>
<dbReference type="EMBL" id="L29394">
    <property type="protein sequence ID" value="AAA52685.1"/>
    <property type="molecule type" value="mRNA"/>
</dbReference>
<dbReference type="EMBL" id="X00637">
    <property type="protein sequence ID" value="CAA25267.1"/>
    <property type="molecule type" value="mRNA"/>
</dbReference>
<dbReference type="EMBL" id="X01793">
    <property type="protein sequence ID" value="CAA25926.1"/>
    <property type="molecule type" value="Genomic_DNA"/>
</dbReference>
<dbReference type="EMBL" id="X01786">
    <property type="protein sequence ID" value="CAA25926.1"/>
    <property type="status" value="JOINED"/>
    <property type="molecule type" value="Genomic_DNA"/>
</dbReference>
<dbReference type="EMBL" id="X02206">
    <property type="protein sequence ID" value="CAA25926.1"/>
    <property type="status" value="JOINED"/>
    <property type="molecule type" value="Genomic_DNA"/>
</dbReference>
<dbReference type="EMBL" id="X01789">
    <property type="protein sequence ID" value="CAA25926.1"/>
    <property type="status" value="JOINED"/>
    <property type="molecule type" value="Genomic_DNA"/>
</dbReference>
<dbReference type="EMBL" id="X01791">
    <property type="protein sequence ID" value="CAA25926.1"/>
    <property type="status" value="JOINED"/>
    <property type="molecule type" value="Genomic_DNA"/>
</dbReference>
<dbReference type="EMBL" id="M10935">
    <property type="protein sequence ID" value="AAA88080.1"/>
    <property type="molecule type" value="Genomic_DNA"/>
</dbReference>
<dbReference type="EMBL" id="M69197">
    <property type="protein sequence ID" value="AAA88078.1"/>
    <property type="molecule type" value="Genomic_DNA"/>
</dbReference>
<dbReference type="EMBL" id="AK314700">
    <property type="protein sequence ID" value="BAF98793.1"/>
    <property type="molecule type" value="mRNA"/>
</dbReference>
<dbReference type="EMBL" id="DQ314870">
    <property type="protein sequence ID" value="ABC40729.1"/>
    <property type="molecule type" value="Genomic_DNA"/>
</dbReference>
<dbReference type="EMBL" id="AC004682">
    <property type="protein sequence ID" value="AAC27432.1"/>
    <property type="molecule type" value="Genomic_DNA"/>
</dbReference>
<dbReference type="EMBL" id="AC009087">
    <property type="status" value="NOT_ANNOTATED_CDS"/>
    <property type="molecule type" value="Genomic_DNA"/>
</dbReference>
<dbReference type="EMBL" id="BC107587">
    <property type="protein sequence ID" value="AAI07588.1"/>
    <property type="molecule type" value="mRNA"/>
</dbReference>
<dbReference type="EMBL" id="BC121124">
    <property type="protein sequence ID" value="AAI21125.1"/>
    <property type="molecule type" value="mRNA"/>
</dbReference>
<dbReference type="EMBL" id="BC121125">
    <property type="protein sequence ID" value="AAI21126.1"/>
    <property type="molecule type" value="mRNA"/>
</dbReference>
<dbReference type="EMBL" id="M13192">
    <property type="status" value="NOT_ANNOTATED_CDS"/>
    <property type="molecule type" value="mRNA"/>
</dbReference>
<dbReference type="EMBL" id="X00606">
    <property type="protein sequence ID" value="CAA25248.1"/>
    <property type="molecule type" value="Genomic_DNA"/>
</dbReference>
<dbReference type="CCDS" id="CCDS45524.1">
    <molecule id="P00738-1"/>
</dbReference>
<dbReference type="CCDS" id="CCDS45525.1">
    <molecule id="P00738-2"/>
</dbReference>
<dbReference type="PIR" id="A92532">
    <property type="entry name" value="HPHU2"/>
</dbReference>
<dbReference type="PIR" id="A93521">
    <property type="entry name" value="HPHU1"/>
</dbReference>
<dbReference type="RefSeq" id="NP_001119574.1">
    <molecule id="P00738-2"/>
    <property type="nucleotide sequence ID" value="NM_001126102.3"/>
</dbReference>
<dbReference type="RefSeq" id="NP_001305067.1">
    <property type="nucleotide sequence ID" value="NM_001318138.1"/>
</dbReference>
<dbReference type="RefSeq" id="NP_005134.1">
    <molecule id="P00738-1"/>
    <property type="nucleotide sequence ID" value="NM_005143.5"/>
</dbReference>
<dbReference type="PDB" id="4WJG">
    <property type="method" value="X-ray"/>
    <property type="resolution" value="3.10 A"/>
    <property type="chains" value="2/C/H/M/R/W=92-406"/>
</dbReference>
<dbReference type="PDB" id="4X0L">
    <property type="method" value="X-ray"/>
    <property type="resolution" value="2.05 A"/>
    <property type="chains" value="C=148-406"/>
</dbReference>
<dbReference type="PDB" id="5HU6">
    <property type="method" value="X-ray"/>
    <property type="resolution" value="2.90 A"/>
    <property type="chains" value="C=148-406"/>
</dbReference>
<dbReference type="PDB" id="6TB2">
    <property type="method" value="X-ray"/>
    <property type="resolution" value="2.90 A"/>
    <property type="chains" value="C=148-406"/>
</dbReference>
<dbReference type="PDB" id="8XMP">
    <property type="method" value="EM"/>
    <property type="resolution" value="3.11 A"/>
    <property type="chains" value="2=1-406"/>
</dbReference>
<dbReference type="PDB" id="8XMQ">
    <property type="method" value="EM"/>
    <property type="resolution" value="3.21 A"/>
    <property type="chains" value="2=1-406"/>
</dbReference>
<dbReference type="PDB" id="8XMW">
    <property type="method" value="EM"/>
    <property type="resolution" value="2.94 A"/>
    <property type="chains" value="2=1-406"/>
</dbReference>
<dbReference type="PDB" id="9FHB">
    <property type="method" value="EM"/>
    <property type="resolution" value="3.87 A"/>
    <property type="chains" value="C=1-406"/>
</dbReference>
<dbReference type="PDB" id="9FMU">
    <property type="method" value="EM"/>
    <property type="resolution" value="4.46 A"/>
    <property type="chains" value="C=1-406"/>
</dbReference>
<dbReference type="PDBsum" id="4WJG"/>
<dbReference type="PDBsum" id="4X0L"/>
<dbReference type="PDBsum" id="5HU6"/>
<dbReference type="PDBsum" id="6TB2"/>
<dbReference type="PDBsum" id="8XMP"/>
<dbReference type="PDBsum" id="8XMQ"/>
<dbReference type="PDBsum" id="8XMW"/>
<dbReference type="PDBsum" id="9FHB"/>
<dbReference type="PDBsum" id="9FMU"/>
<dbReference type="EMDB" id="EMD-38485"/>
<dbReference type="EMDB" id="EMD-38486"/>
<dbReference type="EMDB" id="EMD-38490"/>
<dbReference type="EMDB" id="EMD-50444"/>
<dbReference type="EMDB" id="EMD-50570"/>
<dbReference type="EMDB" id="EMD-50600"/>
<dbReference type="SMR" id="P00738"/>
<dbReference type="BioGRID" id="109480">
    <property type="interactions" value="125"/>
</dbReference>
<dbReference type="CORUM" id="P00738"/>
<dbReference type="FunCoup" id="P00738">
    <property type="interactions" value="467"/>
</dbReference>
<dbReference type="IntAct" id="P00738">
    <property type="interactions" value="70"/>
</dbReference>
<dbReference type="MINT" id="P00738"/>
<dbReference type="STRING" id="9606.ENSP00000348170"/>
<dbReference type="DrugBank" id="DB05645">
    <property type="generic name" value="Larazotide"/>
</dbReference>
<dbReference type="DrugBank" id="DB14533">
    <property type="generic name" value="Zinc chloride"/>
</dbReference>
<dbReference type="DrugBank" id="DB14548">
    <property type="generic name" value="Zinc sulfate, unspecified form"/>
</dbReference>
<dbReference type="MEROPS" id="S01.972"/>
<dbReference type="TCDB" id="8.A.131.1.15">
    <property type="family name" value="the transmembrane protease serine 3 (tmprss3) family"/>
</dbReference>
<dbReference type="CarbonylDB" id="P00738"/>
<dbReference type="GlyConnect" id="744">
    <property type="glycosylation" value="132 N-Linked glycans (4 sites), 1 O-Linked glycan (1 site)"/>
</dbReference>
<dbReference type="GlyCosmos" id="P00738">
    <property type="glycosylation" value="5 sites, 154 glycans"/>
</dbReference>
<dbReference type="GlyGen" id="P00738">
    <property type="glycosylation" value="7 sites, 296 N-linked glycans (4 sites), 2 O-linked glycans (2 sites)"/>
</dbReference>
<dbReference type="iPTMnet" id="P00738"/>
<dbReference type="PhosphoSitePlus" id="P00738"/>
<dbReference type="SwissPalm" id="P00738"/>
<dbReference type="BioMuta" id="HP"/>
<dbReference type="DMDM" id="123508"/>
<dbReference type="CPTAC" id="CPTAC-671"/>
<dbReference type="CPTAC" id="non-CPTAC-1128"/>
<dbReference type="CPTAC" id="non-CPTAC-2671"/>
<dbReference type="jPOST" id="P00738"/>
<dbReference type="MassIVE" id="P00738"/>
<dbReference type="PaxDb" id="9606-ENSP00000348170"/>
<dbReference type="PeptideAtlas" id="P00738"/>
<dbReference type="PRIDE" id="P00738"/>
<dbReference type="ProteomicsDB" id="51271">
    <molecule id="P00738-1"/>
</dbReference>
<dbReference type="ProteomicsDB" id="58792"/>
<dbReference type="Pumba" id="P00738"/>
<dbReference type="Antibodypedia" id="48338">
    <property type="antibodies" value="1266 antibodies from 44 providers"/>
</dbReference>
<dbReference type="DNASU" id="3240"/>
<dbReference type="Ensembl" id="ENST00000355906.10">
    <molecule id="P00738-1"/>
    <property type="protein sequence ID" value="ENSP00000348170.5"/>
    <property type="gene ID" value="ENSG00000257017.10"/>
</dbReference>
<dbReference type="Ensembl" id="ENST00000398131.6">
    <molecule id="P00738-2"/>
    <property type="protein sequence ID" value="ENSP00000381199.2"/>
    <property type="gene ID" value="ENSG00000257017.10"/>
</dbReference>
<dbReference type="Ensembl" id="ENST00000570083.5">
    <molecule id="P00738-2"/>
    <property type="protein sequence ID" value="ENSP00000457629.1"/>
    <property type="gene ID" value="ENSG00000257017.10"/>
</dbReference>
<dbReference type="GeneID" id="3240"/>
<dbReference type="KEGG" id="hsa:3240"/>
<dbReference type="MANE-Select" id="ENST00000355906.10">
    <property type="protein sequence ID" value="ENSP00000348170.5"/>
    <property type="RefSeq nucleotide sequence ID" value="NM_005143.5"/>
    <property type="RefSeq protein sequence ID" value="NP_005134.1"/>
</dbReference>
<dbReference type="UCSC" id="uc002fbr.5">
    <molecule id="P00738-1"/>
    <property type="organism name" value="human"/>
</dbReference>
<dbReference type="AGR" id="HGNC:5141"/>
<dbReference type="CTD" id="3240"/>
<dbReference type="DisGeNET" id="3240"/>
<dbReference type="GeneCards" id="HP"/>
<dbReference type="HGNC" id="HGNC:5141">
    <property type="gene designation" value="HP"/>
</dbReference>
<dbReference type="HPA" id="ENSG00000257017">
    <property type="expression patterns" value="Tissue enriched (liver)"/>
</dbReference>
<dbReference type="MalaCards" id="HP"/>
<dbReference type="MIM" id="140100">
    <property type="type" value="gene"/>
</dbReference>
<dbReference type="MIM" id="614081">
    <property type="type" value="phenotype"/>
</dbReference>
<dbReference type="neXtProt" id="NX_P00738"/>
<dbReference type="OpenTargets" id="ENSG00000257017"/>
<dbReference type="PharmGKB" id="PA29415"/>
<dbReference type="VEuPathDB" id="HostDB:ENSG00000257017"/>
<dbReference type="eggNOG" id="KOG3627">
    <property type="taxonomic scope" value="Eukaryota"/>
</dbReference>
<dbReference type="GeneTree" id="ENSGT00940000159903"/>
<dbReference type="HOGENOM" id="CLU_006842_0_0_1"/>
<dbReference type="InParanoid" id="P00738"/>
<dbReference type="OMA" id="NFRFTEH"/>
<dbReference type="OrthoDB" id="6339452at2759"/>
<dbReference type="PAN-GO" id="P00738">
    <property type="GO annotations" value="6 GO annotations based on evolutionary models"/>
</dbReference>
<dbReference type="PhylomeDB" id="P00738"/>
<dbReference type="TreeFam" id="TF334326"/>
<dbReference type="PathwayCommons" id="P00738"/>
<dbReference type="Reactome" id="R-HSA-2168880">
    <property type="pathway name" value="Scavenging of heme from plasma"/>
</dbReference>
<dbReference type="Reactome" id="R-HSA-6798695">
    <property type="pathway name" value="Neutrophil degranulation"/>
</dbReference>
<dbReference type="SignaLink" id="P00738"/>
<dbReference type="SIGNOR" id="P00738"/>
<dbReference type="BioGRID-ORCS" id="3240">
    <property type="hits" value="12 hits in 1070 CRISPR screens"/>
</dbReference>
<dbReference type="ChiTaRS" id="HP">
    <property type="organism name" value="human"/>
</dbReference>
<dbReference type="EvolutionaryTrace" id="P00738"/>
<dbReference type="GeneWiki" id="Haptoglobin"/>
<dbReference type="GenomeRNAi" id="3240"/>
<dbReference type="Pharos" id="P00738">
    <property type="development level" value="Tbio"/>
</dbReference>
<dbReference type="PRO" id="PR:P00738"/>
<dbReference type="Proteomes" id="UP000005640">
    <property type="component" value="Chromosome 16"/>
</dbReference>
<dbReference type="RNAct" id="P00738">
    <property type="molecule type" value="protein"/>
</dbReference>
<dbReference type="Bgee" id="ENSG00000257017">
    <property type="expression patterns" value="Expressed in pericardium and 167 other cell types or tissues"/>
</dbReference>
<dbReference type="ExpressionAtlas" id="P00738">
    <property type="expression patterns" value="baseline and differential"/>
</dbReference>
<dbReference type="GO" id="GO:0072562">
    <property type="term" value="C:blood microparticle"/>
    <property type="evidence" value="ECO:0007005"/>
    <property type="project" value="UniProtKB"/>
</dbReference>
<dbReference type="GO" id="GO:0071682">
    <property type="term" value="C:endocytic vesicle lumen"/>
    <property type="evidence" value="ECO:0000304"/>
    <property type="project" value="Reactome"/>
</dbReference>
<dbReference type="GO" id="GO:0070062">
    <property type="term" value="C:extracellular exosome"/>
    <property type="evidence" value="ECO:0007005"/>
    <property type="project" value="UniProtKB"/>
</dbReference>
<dbReference type="GO" id="GO:0005576">
    <property type="term" value="C:extracellular region"/>
    <property type="evidence" value="ECO:0000304"/>
    <property type="project" value="Reactome"/>
</dbReference>
<dbReference type="GO" id="GO:0005615">
    <property type="term" value="C:extracellular space"/>
    <property type="evidence" value="ECO:0000314"/>
    <property type="project" value="UniProtKB"/>
</dbReference>
<dbReference type="GO" id="GO:0031838">
    <property type="term" value="C:haptoglobin-hemoglobin complex"/>
    <property type="evidence" value="ECO:0000314"/>
    <property type="project" value="BHF-UCL"/>
</dbReference>
<dbReference type="GO" id="GO:0035580">
    <property type="term" value="C:specific granule lumen"/>
    <property type="evidence" value="ECO:0000304"/>
    <property type="project" value="Reactome"/>
</dbReference>
<dbReference type="GO" id="GO:1904724">
    <property type="term" value="C:tertiary granule lumen"/>
    <property type="evidence" value="ECO:0000304"/>
    <property type="project" value="Reactome"/>
</dbReference>
<dbReference type="GO" id="GO:0016209">
    <property type="term" value="F:antioxidant activity"/>
    <property type="evidence" value="ECO:0007669"/>
    <property type="project" value="UniProtKB-KW"/>
</dbReference>
<dbReference type="GO" id="GO:0030492">
    <property type="term" value="F:hemoglobin binding"/>
    <property type="evidence" value="ECO:0000314"/>
    <property type="project" value="BHF-UCL"/>
</dbReference>
<dbReference type="GO" id="GO:0004252">
    <property type="term" value="F:serine-type endopeptidase activity"/>
    <property type="evidence" value="ECO:0000318"/>
    <property type="project" value="GO_Central"/>
</dbReference>
<dbReference type="GO" id="GO:0006953">
    <property type="term" value="P:acute-phase response"/>
    <property type="evidence" value="ECO:0007669"/>
    <property type="project" value="UniProtKB-KW"/>
</dbReference>
<dbReference type="GO" id="GO:0006952">
    <property type="term" value="P:defense response"/>
    <property type="evidence" value="ECO:0000304"/>
    <property type="project" value="ProtInc"/>
</dbReference>
<dbReference type="GO" id="GO:0042742">
    <property type="term" value="P:defense response to bacterium"/>
    <property type="evidence" value="ECO:0007669"/>
    <property type="project" value="UniProtKB-KW"/>
</dbReference>
<dbReference type="GO" id="GO:0002376">
    <property type="term" value="P:immune system process"/>
    <property type="evidence" value="ECO:0007669"/>
    <property type="project" value="UniProtKB-KW"/>
</dbReference>
<dbReference type="GO" id="GO:0006954">
    <property type="term" value="P:inflammatory response"/>
    <property type="evidence" value="ECO:0000314"/>
    <property type="project" value="BHF-UCL"/>
</dbReference>
<dbReference type="GO" id="GO:2000296">
    <property type="term" value="P:negative regulation of hydrogen peroxide catabolic process"/>
    <property type="evidence" value="ECO:0000314"/>
    <property type="project" value="BHF-UCL"/>
</dbReference>
<dbReference type="GO" id="GO:0042542">
    <property type="term" value="P:response to hydrogen peroxide"/>
    <property type="evidence" value="ECO:0000314"/>
    <property type="project" value="BHF-UCL"/>
</dbReference>
<dbReference type="GO" id="GO:0031638">
    <property type="term" value="P:zymogen activation"/>
    <property type="evidence" value="ECO:0000318"/>
    <property type="project" value="GO_Central"/>
</dbReference>
<dbReference type="CDD" id="cd00033">
    <property type="entry name" value="CCP"/>
    <property type="match status" value="2"/>
</dbReference>
<dbReference type="CDD" id="cd00190">
    <property type="entry name" value="Tryp_SPc"/>
    <property type="match status" value="1"/>
</dbReference>
<dbReference type="FunFam" id="2.10.70.10:FF:000048">
    <property type="entry name" value="Haptoglobin"/>
    <property type="match status" value="2"/>
</dbReference>
<dbReference type="FunFam" id="2.40.10.10:FF:000027">
    <property type="entry name" value="Haptoglobin"/>
    <property type="match status" value="1"/>
</dbReference>
<dbReference type="FunFam" id="2.40.10.10:FF:000031">
    <property type="entry name" value="Haptoglobin"/>
    <property type="match status" value="1"/>
</dbReference>
<dbReference type="Gene3D" id="2.10.70.10">
    <property type="entry name" value="Complement Module, domain 1"/>
    <property type="match status" value="2"/>
</dbReference>
<dbReference type="Gene3D" id="2.40.10.10">
    <property type="entry name" value="Trypsin-like serine proteases"/>
    <property type="match status" value="2"/>
</dbReference>
<dbReference type="InterPro" id="IPR009003">
    <property type="entry name" value="Peptidase_S1_PA"/>
</dbReference>
<dbReference type="InterPro" id="IPR043504">
    <property type="entry name" value="Peptidase_S1_PA_chymotrypsin"/>
</dbReference>
<dbReference type="InterPro" id="IPR001314">
    <property type="entry name" value="Peptidase_S1A"/>
</dbReference>
<dbReference type="InterPro" id="IPR035976">
    <property type="entry name" value="Sushi/SCR/CCP_sf"/>
</dbReference>
<dbReference type="InterPro" id="IPR000436">
    <property type="entry name" value="Sushi_SCR_CCP_dom"/>
</dbReference>
<dbReference type="InterPro" id="IPR001254">
    <property type="entry name" value="Trypsin_dom"/>
</dbReference>
<dbReference type="PANTHER" id="PTHR24255">
    <property type="entry name" value="COMPLEMENT COMPONENT 1, S SUBCOMPONENT-RELATED"/>
    <property type="match status" value="1"/>
</dbReference>
<dbReference type="PANTHER" id="PTHR24255:SF30">
    <property type="entry name" value="HAPTOGLOBIN"/>
    <property type="match status" value="1"/>
</dbReference>
<dbReference type="Pfam" id="PF00089">
    <property type="entry name" value="Trypsin"/>
    <property type="match status" value="1"/>
</dbReference>
<dbReference type="PRINTS" id="PR00722">
    <property type="entry name" value="CHYMOTRYPSIN"/>
</dbReference>
<dbReference type="SMART" id="SM00020">
    <property type="entry name" value="Tryp_SPc"/>
    <property type="match status" value="1"/>
</dbReference>
<dbReference type="SUPFAM" id="SSF57535">
    <property type="entry name" value="Complement control module/SCR domain"/>
    <property type="match status" value="2"/>
</dbReference>
<dbReference type="SUPFAM" id="SSF50494">
    <property type="entry name" value="Trypsin-like serine proteases"/>
    <property type="match status" value="1"/>
</dbReference>
<dbReference type="PROSITE" id="PS50923">
    <property type="entry name" value="SUSHI"/>
    <property type="match status" value="2"/>
</dbReference>
<dbReference type="PROSITE" id="PS50240">
    <property type="entry name" value="TRYPSIN_DOM"/>
    <property type="match status" value="1"/>
</dbReference>
<feature type="signal peptide" evidence="19">
    <location>
        <begin position="1"/>
        <end position="18"/>
    </location>
</feature>
<feature type="chain" id="PRO_0000028456" description="Haptoglobin">
    <location>
        <begin position="19"/>
        <end position="406"/>
    </location>
</feature>
<feature type="chain" id="PRO_0000028457" description="Haptoglobin alpha chain">
    <location>
        <begin position="19"/>
        <end position="160"/>
    </location>
</feature>
<feature type="chain" id="PRO_0000028458" description="Haptoglobin beta chain">
    <location>
        <begin position="162"/>
        <end position="406"/>
    </location>
</feature>
<feature type="domain" description="Sushi 1" evidence="4">
    <location>
        <begin position="31"/>
        <end position="88"/>
    </location>
</feature>
<feature type="domain" description="Sushi 2" evidence="4">
    <location>
        <begin position="90"/>
        <end position="147"/>
    </location>
</feature>
<feature type="domain" description="Peptidase S1" evidence="3">
    <location>
        <begin position="162"/>
        <end position="404"/>
    </location>
</feature>
<feature type="region of interest" description="Interaction with CD163" evidence="1">
    <location>
        <begin position="318"/>
        <end position="323"/>
    </location>
</feature>
<feature type="glycosylation site" description="N-linked (GlcNAc...) (complex) asparagine" evidence="6 8 10 11">
    <location>
        <position position="184"/>
    </location>
</feature>
<feature type="glycosylation site" description="N-linked (GlcNAc...) asparagine" evidence="5 6 8 9 11">
    <location>
        <position position="207"/>
    </location>
</feature>
<feature type="glycosylation site" description="N-linked (GlcNAc...) asparagine" evidence="6 8 9 11">
    <location>
        <position position="211"/>
    </location>
</feature>
<feature type="glycosylation site" description="N-linked (GlcNAc...) (complex) asparagine" evidence="5 6 8 10 11 12">
    <location>
        <position position="241"/>
    </location>
</feature>
<feature type="disulfide bond" description="Interchain">
    <location>
        <position position="33"/>
    </location>
</feature>
<feature type="disulfide bond">
    <location>
        <begin position="52"/>
        <end position="86"/>
    </location>
</feature>
<feature type="disulfide bond" description="Interchain">
    <location>
        <position position="92"/>
    </location>
</feature>
<feature type="disulfide bond">
    <location>
        <begin position="111"/>
        <end position="145"/>
    </location>
</feature>
<feature type="disulfide bond" description="Interchain (between alpha and beta chains)">
    <location>
        <begin position="149"/>
        <end position="266"/>
    </location>
</feature>
<feature type="disulfide bond">
    <location>
        <begin position="309"/>
        <end position="340"/>
    </location>
</feature>
<feature type="disulfide bond">
    <location>
        <begin position="351"/>
        <end position="381"/>
    </location>
</feature>
<feature type="splice variant" id="VSP_055024" description="In isoform 2." evidence="20">
    <location>
        <begin position="38"/>
        <end position="96"/>
    </location>
</feature>
<feature type="sequence variant" id="VAR_017112" description="In allele HP*1F and allele HP*1S." evidence="17 18">
    <location>
        <begin position="29"/>
        <end position="87"/>
    </location>
</feature>
<feature type="sequence variant" id="VAR_005294" description="In allele HP*1F; dbSNP:rs199926732." evidence="15 18">
    <original>N</original>
    <variation>D</variation>
    <location>
        <position position="129"/>
    </location>
</feature>
<feature type="sequence variant" id="VAR_017113" description="In allele HP*1F; dbSNP:rs200877317." evidence="18">
    <original>E</original>
    <variation>K</variation>
    <location>
        <position position="130"/>
    </location>
</feature>
<feature type="sequence variant" id="VAR_066214" description="In AHP; causes reduced expression of the protein; dbSNP:rs104894517." evidence="7">
    <original>I</original>
    <variation>T</variation>
    <location>
        <position position="247"/>
    </location>
</feature>
<feature type="sequence variant" id="VAR_017114" description="In dbSNP:rs189115161.">
    <original>D</original>
    <variation>H</variation>
    <location>
        <position position="397"/>
    </location>
</feature>
<feature type="sequence conflict" description="In Ref. 2; AAA52687." evidence="20" ref="2">
    <original>D</original>
    <variation>N</variation>
    <location>
        <position position="70"/>
    </location>
</feature>
<feature type="sequence conflict" description="In Ref. 11; AAI07588." evidence="20" ref="11">
    <original>E</original>
    <variation>G</variation>
    <location>
        <position position="130"/>
    </location>
</feature>
<feature type="strand" evidence="21">
    <location>
        <begin position="101"/>
        <end position="111"/>
    </location>
</feature>
<feature type="strand" evidence="21">
    <location>
        <begin position="115"/>
        <end position="121"/>
    </location>
</feature>
<feature type="strand" evidence="21">
    <location>
        <begin position="123"/>
        <end position="127"/>
    </location>
</feature>
<feature type="strand" evidence="21">
    <location>
        <begin position="133"/>
        <end position="135"/>
    </location>
</feature>
<feature type="turn" evidence="21">
    <location>
        <begin position="136"/>
        <end position="138"/>
    </location>
</feature>
<feature type="strand" evidence="21">
    <location>
        <begin position="144"/>
        <end position="147"/>
    </location>
</feature>
<feature type="strand" evidence="22">
    <location>
        <begin position="163"/>
        <end position="167"/>
    </location>
</feature>
<feature type="strand" evidence="22">
    <location>
        <begin position="176"/>
        <end position="180"/>
    </location>
</feature>
<feature type="strand" evidence="22">
    <location>
        <begin position="186"/>
        <end position="193"/>
    </location>
</feature>
<feature type="strand" evidence="22">
    <location>
        <begin position="196"/>
        <end position="199"/>
    </location>
</feature>
<feature type="helix" evidence="22">
    <location>
        <begin position="201"/>
        <end position="204"/>
    </location>
</feature>
<feature type="turn" evidence="22">
    <location>
        <begin position="205"/>
        <end position="207"/>
    </location>
</feature>
<feature type="helix" evidence="22">
    <location>
        <begin position="214"/>
        <end position="217"/>
    </location>
</feature>
<feature type="helix" evidence="22">
    <location>
        <begin position="218"/>
        <end position="220"/>
    </location>
</feature>
<feature type="strand" evidence="22">
    <location>
        <begin position="222"/>
        <end position="225"/>
    </location>
</feature>
<feature type="turn" evidence="22">
    <location>
        <begin position="226"/>
        <end position="228"/>
    </location>
</feature>
<feature type="strand" evidence="22">
    <location>
        <begin position="229"/>
        <end position="231"/>
    </location>
</feature>
<feature type="strand" evidence="22">
    <location>
        <begin position="233"/>
        <end position="238"/>
    </location>
</feature>
<feature type="turn" evidence="22">
    <location>
        <begin position="240"/>
        <end position="244"/>
    </location>
</feature>
<feature type="strand" evidence="22">
    <location>
        <begin position="248"/>
        <end position="254"/>
    </location>
</feature>
<feature type="strand" evidence="23">
    <location>
        <begin position="259"/>
        <end position="261"/>
    </location>
</feature>
<feature type="strand" evidence="22">
    <location>
        <begin position="278"/>
        <end position="283"/>
    </location>
</feature>
<feature type="strand" evidence="22">
    <location>
        <begin position="290"/>
        <end position="292"/>
    </location>
</feature>
<feature type="strand" evidence="22">
    <location>
        <begin position="297"/>
        <end position="303"/>
    </location>
</feature>
<feature type="helix" evidence="22">
    <location>
        <begin position="306"/>
        <end position="314"/>
    </location>
</feature>
<feature type="helix" evidence="22">
    <location>
        <begin position="319"/>
        <end position="321"/>
    </location>
</feature>
<feature type="strand" evidence="21">
    <location>
        <begin position="327"/>
        <end position="330"/>
    </location>
</feature>
<feature type="strand" evidence="22">
    <location>
        <begin position="338"/>
        <end position="341"/>
    </location>
</feature>
<feature type="strand" evidence="24">
    <location>
        <begin position="345"/>
        <end position="347"/>
    </location>
</feature>
<feature type="strand" evidence="22">
    <location>
        <begin position="358"/>
        <end position="363"/>
    </location>
</feature>
<feature type="turn" evidence="22">
    <location>
        <begin position="364"/>
        <end position="367"/>
    </location>
</feature>
<feature type="strand" evidence="22">
    <location>
        <begin position="368"/>
        <end position="377"/>
    </location>
</feature>
<feature type="turn" evidence="22">
    <location>
        <begin position="381"/>
        <end position="383"/>
    </location>
</feature>
<feature type="strand" evidence="22">
    <location>
        <begin position="387"/>
        <end position="391"/>
    </location>
</feature>
<feature type="helix" evidence="22">
    <location>
        <begin position="392"/>
        <end position="394"/>
    </location>
</feature>
<feature type="helix" evidence="22">
    <location>
        <begin position="396"/>
        <end position="405"/>
    </location>
</feature>
<name>HPT_HUMAN</name>
<sequence length="406" mass="45205">MSALGAVIALLLWGQLFAVDSGNDVTDIADDGCPKPPEIAHGYVEHSVRYQCKNYYKLRTEGDGVYTLNDKKQWINKAVGDKLPECEADDGCPKPPEIAHGYVEHSVRYQCKNYYKLRTEGDGVYTLNNEKQWINKAVGDKLPECEAVCGKPKNPANPVQRILGGHLDAKGSFPWQAKMVSHHNLTTGATLINEQWLLTTAKNLFLNHSENATAKDIAPTLTLYVGKKQLVEIEKVVLHPNYSQVDIGLIKLKQKVSVNERVMPICLPSKDYAEVGRVGYVSGWGRNANFKFTDHLKYVMLPVADQDQCIRHYEGSTVPEKKTPKSPVGVQPILNEHTFCAGMSKYQEDTCYGDAGSAFAVHDLEEDTWYATGILSFDKSCAVAEYGVYVKVTSIQDWVQKTIAEN</sequence>
<keyword id="KW-0002">3D-structure</keyword>
<keyword id="KW-0011">Acute phase</keyword>
<keyword id="KW-0025">Alternative splicing</keyword>
<keyword id="KW-0044">Antibiotic</keyword>
<keyword id="KW-0929">Antimicrobial</keyword>
<keyword id="KW-0049">Antioxidant</keyword>
<keyword id="KW-0903">Direct protein sequencing</keyword>
<keyword id="KW-0225">Disease variant</keyword>
<keyword id="KW-1015">Disulfide bond</keyword>
<keyword id="KW-0325">Glycoprotein</keyword>
<keyword id="KW-0351">Hemoglobin-binding</keyword>
<keyword id="KW-0391">Immunity</keyword>
<keyword id="KW-1267">Proteomics identification</keyword>
<keyword id="KW-1185">Reference proteome</keyword>
<keyword id="KW-0677">Repeat</keyword>
<keyword id="KW-0964">Secreted</keyword>
<keyword id="KW-0721">Serine protease homolog</keyword>
<keyword id="KW-0732">Signal</keyword>
<keyword id="KW-0768">Sushi</keyword>
<comment type="function">
    <text evidence="13">As a result of hemolysis, hemoglobin is found to accumulate in the kidney and is secreted in the urine. Haptoglobin captures, and combines with free plasma hemoglobin to allow hepatic recycling of heme iron and to prevent kidney damage. Haptoglobin also acts as an antioxidant, has antibacterial activity, and plays a role in modulating many aspects of the acute phase response. Hemoglobin/haptoglobin complexes are rapidly cleared by the macrophage CD163 scavenger receptor expressed on the surface of liver Kupfer cells through an endocytic lysosomal degradation pathway.</text>
</comment>
<comment type="function">
    <text evidence="13">The uncleaved form of allele alpha-2 (2-2), known as zonulin, plays a role in intestinal permeability, allowing intercellular tight junction disassembly, and controlling the equilibrium between tolerance and immunity to non-self antigens.</text>
</comment>
<comment type="subunit">
    <text evidence="2 14 16 19">Tetramer of two alpha and two beta chains; disulfide-linked (PubMed:4573324, PubMed:6997877). The hemoglobin/haptoglobin complex is composed of a haptoglobin dimer bound to two hemoglobin alpha-beta dimers (By similarity). Interacts with CD163 (By similarity). Interacts with ERGIC3 (PubMed:31142615).</text>
</comment>
<comment type="interaction">
    <interactant intactId="EBI-1220767">
        <id>P00738</id>
    </interactant>
    <interactant intactId="EBI-701692">
        <id>P02647</id>
        <label>APOA1</label>
    </interactant>
    <organismsDiffer>false</organismsDiffer>
    <experiments>3</experiments>
</comment>
<comment type="interaction">
    <interactant intactId="EBI-1220767">
        <id>P00738</id>
    </interactant>
    <interactant intactId="EBI-1222467">
        <id>P02649</id>
        <label>APOE</label>
    </interactant>
    <organismsDiffer>false</organismsDiffer>
    <experiments>7</experiments>
</comment>
<comment type="interaction">
    <interactant intactId="EBI-1220767">
        <id>P00738</id>
    </interactant>
    <interactant intactId="EBI-781551">
        <id>Q9Y282</id>
        <label>ERGIC3</label>
    </interactant>
    <organismsDiffer>false</organismsDiffer>
    <experiments>2</experiments>
</comment>
<comment type="subcellular location">
    <subcellularLocation>
        <location>Secreted</location>
    </subcellularLocation>
</comment>
<comment type="alternative products">
    <event type="alternative splicing"/>
    <isoform>
        <id>P00738-1</id>
        <name>1</name>
        <sequence type="displayed"/>
    </isoform>
    <isoform>
        <id>P00738-2</id>
        <name>2</name>
        <sequence type="described" ref="VSP_055024"/>
    </isoform>
</comment>
<comment type="tissue specificity">
    <text>Expressed by the liver and secreted in plasma.</text>
</comment>
<comment type="polymorphism">
    <text evidence="15 17 18">In human populations there are two major allelic forms, alpha-1 (1-1) with 83 residues and alpha-2 (2-2) with 142 residues. These alleles determine 3 possible genotypes, homozygous (1-1 or 2-2) and heterozygous (2-1), and 3 major phenotypes HP*1F/HP*1S and HP*2FS. The two main alleles of HP*1 are called HP*1F (fast) and HP*1S (slow). The alleles exhibit different oligomerization properties. In healthy males, but not in females, the Hp 2-2 phenotype is associated with higher serum iron, decreased antimicrobial and antioxidant capability, and less efficient clearance from the circulation, than Hp 1-1 and 2-1. The sequence displayed in this entry corresponds to allele alpha-2 (2-2).</text>
</comment>
<comment type="disease" evidence="7">
    <disease id="DI-03152">
        <name>Anhaptoglobinemia</name>
        <acronym>AHP</acronym>
        <description>A condition characterized by the absence of the serum glycoprotein haptoglobin. Serum levels of haptoglobin vary among normal persons: levels are low in the neonatal period and in the elderly, differ by population, and can be influenced by environmental factors, such as infection. Secondary hypohaptoglobinemia can occur as a consequence of hemolysis, during which haptoglobin binds to free hemoglobin. Congenital haptoglobin deficiency is a risk factor for anaphylactic non-hemolytic transfusion reactions.</description>
        <dbReference type="MIM" id="614081"/>
    </disease>
    <text>The disease is caused by variants affecting the gene represented in this entry.</text>
</comment>
<comment type="similarity">
    <text evidence="3">Belongs to the peptidase S1 family.</text>
</comment>
<comment type="caution">
    <text evidence="20">Although homologous to serine proteases, it has lost all essential catalytic residues and has no enzymatic activity.</text>
</comment>
<comment type="online information" name="Wikipedia">
    <link uri="https://en.wikipedia.org/wiki/Haptoglobin"/>
    <text>Haptoglobin entry</text>
</comment>
<reference key="1">
    <citation type="journal article" date="1983" name="EMBO J.">
        <title>Molecular cloning of human haptoglobin cDNA: evidence for a single mRNA coding for alpha 2 and beta chains.</title>
        <authorList>
            <person name="van der Straten A."/>
            <person name="Herzog A."/>
            <person name="Jacobs P."/>
            <person name="Cabezon T."/>
            <person name="Bollen A."/>
        </authorList>
    </citation>
    <scope>NUCLEOTIDE SEQUENCE [MRNA]</scope>
</reference>
<reference key="2">
    <citation type="journal article" date="1983" name="Proc. Natl. Acad. Sci. U.S.A.">
        <title>Identification and characterization of human haptoglobin cDNA.</title>
        <authorList>
            <person name="Yang F."/>
            <person name="Brune J.L."/>
            <person name="Baldwin W.D."/>
            <person name="Barnett D.R."/>
            <person name="Bowman B.H."/>
        </authorList>
    </citation>
    <scope>NUCLEOTIDE SEQUENCE [MRNA]</scope>
</reference>
<reference key="3">
    <citation type="journal article" date="1984" name="FEBS Lett.">
        <title>Characterization of human haptoglobin cDNAs coding for alpha 2FS beta and alpha 1S beta variants.</title>
        <authorList>
            <person name="van der Straten A."/>
            <person name="Herzog A."/>
            <person name="Cabezon T."/>
            <person name="Bollen A."/>
        </authorList>
    </citation>
    <scope>NUCLEOTIDE SEQUENCE [MRNA]</scope>
    <scope>VARIANTS 29-ALA--GLU-87 DEL; ASP-129 AND LYS-130</scope>
    <source>
        <tissue>Liver</tissue>
    </source>
</reference>
<reference key="4">
    <citation type="journal article" date="1984" name="Nucleic Acids Res.">
        <title>Evolution of haptoglobin: comparison of complementary DNA encoding Hp alpha 1S and Hp alpha 2FS.</title>
        <authorList>
            <person name="Brune J.L."/>
            <person name="Yang F."/>
            <person name="Barnett D.R."/>
            <person name="Bowman B.H."/>
        </authorList>
    </citation>
    <scope>NUCLEOTIDE SEQUENCE [MRNA]</scope>
    <scope>VARIANT 29-ALA--GLU-87 DEL</scope>
</reference>
<reference key="5">
    <citation type="journal article" date="1985" name="EMBO J.">
        <title>Structure and expression of the human haptoglobin locus.</title>
        <authorList>
            <person name="Bensi G."/>
            <person name="Raugei G."/>
            <person name="Klefenz H."/>
            <person name="Cortese R."/>
        </authorList>
    </citation>
    <scope>NUCLEOTIDE SEQUENCE [GENOMIC DNA]</scope>
    <scope>VARIANT ASP-129</scope>
</reference>
<reference key="6">
    <citation type="journal article" date="1985" name="J. Biol. Chem.">
        <title>Nucleotide sequence of the haptoglobin and haptoglobin-related gene pair. The haptoglobin-related gene contains a retrovirus-like element.</title>
        <authorList>
            <person name="Maeda N."/>
        </authorList>
    </citation>
    <scope>NUCLEOTIDE SEQUENCE [GENOMIC DNA]</scope>
</reference>
<reference key="7">
    <citation type="journal article" date="1992" name="Genomics">
        <title>Junctions between genes in the haptoglobin gene cluster of primates.</title>
        <authorList>
            <person name="Erickson L.M."/>
            <person name="Kim H.S."/>
            <person name="Maeda N."/>
        </authorList>
    </citation>
    <scope>NUCLEOTIDE SEQUENCE [GENOMIC DNA]</scope>
</reference>
<reference key="8">
    <citation type="journal article" date="2004" name="Nat. Genet.">
        <title>Complete sequencing and characterization of 21,243 full-length human cDNAs.</title>
        <authorList>
            <person name="Ota T."/>
            <person name="Suzuki Y."/>
            <person name="Nishikawa T."/>
            <person name="Otsuki T."/>
            <person name="Sugiyama T."/>
            <person name="Irie R."/>
            <person name="Wakamatsu A."/>
            <person name="Hayashi K."/>
            <person name="Sato H."/>
            <person name="Nagai K."/>
            <person name="Kimura K."/>
            <person name="Makita H."/>
            <person name="Sekine M."/>
            <person name="Obayashi M."/>
            <person name="Nishi T."/>
            <person name="Shibahara T."/>
            <person name="Tanaka T."/>
            <person name="Ishii S."/>
            <person name="Yamamoto J."/>
            <person name="Saito K."/>
            <person name="Kawai Y."/>
            <person name="Isono Y."/>
            <person name="Nakamura Y."/>
            <person name="Nagahari K."/>
            <person name="Murakami K."/>
            <person name="Yasuda T."/>
            <person name="Iwayanagi T."/>
            <person name="Wagatsuma M."/>
            <person name="Shiratori A."/>
            <person name="Sudo H."/>
            <person name="Hosoiri T."/>
            <person name="Kaku Y."/>
            <person name="Kodaira H."/>
            <person name="Kondo H."/>
            <person name="Sugawara M."/>
            <person name="Takahashi M."/>
            <person name="Kanda K."/>
            <person name="Yokoi T."/>
            <person name="Furuya T."/>
            <person name="Kikkawa E."/>
            <person name="Omura Y."/>
            <person name="Abe K."/>
            <person name="Kamihara K."/>
            <person name="Katsuta N."/>
            <person name="Sato K."/>
            <person name="Tanikawa M."/>
            <person name="Yamazaki M."/>
            <person name="Ninomiya K."/>
            <person name="Ishibashi T."/>
            <person name="Yamashita H."/>
            <person name="Murakawa K."/>
            <person name="Fujimori K."/>
            <person name="Tanai H."/>
            <person name="Kimata M."/>
            <person name="Watanabe M."/>
            <person name="Hiraoka S."/>
            <person name="Chiba Y."/>
            <person name="Ishida S."/>
            <person name="Ono Y."/>
            <person name="Takiguchi S."/>
            <person name="Watanabe S."/>
            <person name="Yosida M."/>
            <person name="Hotuta T."/>
            <person name="Kusano J."/>
            <person name="Kanehori K."/>
            <person name="Takahashi-Fujii A."/>
            <person name="Hara H."/>
            <person name="Tanase T.-O."/>
            <person name="Nomura Y."/>
            <person name="Togiya S."/>
            <person name="Komai F."/>
            <person name="Hara R."/>
            <person name="Takeuchi K."/>
            <person name="Arita M."/>
            <person name="Imose N."/>
            <person name="Musashino K."/>
            <person name="Yuuki H."/>
            <person name="Oshima A."/>
            <person name="Sasaki N."/>
            <person name="Aotsuka S."/>
            <person name="Yoshikawa Y."/>
            <person name="Matsunawa H."/>
            <person name="Ichihara T."/>
            <person name="Shiohata N."/>
            <person name="Sano S."/>
            <person name="Moriya S."/>
            <person name="Momiyama H."/>
            <person name="Satoh N."/>
            <person name="Takami S."/>
            <person name="Terashima Y."/>
            <person name="Suzuki O."/>
            <person name="Nakagawa S."/>
            <person name="Senoh A."/>
            <person name="Mizoguchi H."/>
            <person name="Goto Y."/>
            <person name="Shimizu F."/>
            <person name="Wakebe H."/>
            <person name="Hishigaki H."/>
            <person name="Watanabe T."/>
            <person name="Sugiyama A."/>
            <person name="Takemoto M."/>
            <person name="Kawakami B."/>
            <person name="Yamazaki M."/>
            <person name="Watanabe K."/>
            <person name="Kumagai A."/>
            <person name="Itakura S."/>
            <person name="Fukuzumi Y."/>
            <person name="Fujimori Y."/>
            <person name="Komiyama M."/>
            <person name="Tashiro H."/>
            <person name="Tanigami A."/>
            <person name="Fujiwara T."/>
            <person name="Ono T."/>
            <person name="Yamada K."/>
            <person name="Fujii Y."/>
            <person name="Ozaki K."/>
            <person name="Hirao M."/>
            <person name="Ohmori Y."/>
            <person name="Kawabata A."/>
            <person name="Hikiji T."/>
            <person name="Kobatake N."/>
            <person name="Inagaki H."/>
            <person name="Ikema Y."/>
            <person name="Okamoto S."/>
            <person name="Okitani R."/>
            <person name="Kawakami T."/>
            <person name="Noguchi S."/>
            <person name="Itoh T."/>
            <person name="Shigeta K."/>
            <person name="Senba T."/>
            <person name="Matsumura K."/>
            <person name="Nakajima Y."/>
            <person name="Mizuno T."/>
            <person name="Morinaga M."/>
            <person name="Sasaki M."/>
            <person name="Togashi T."/>
            <person name="Oyama M."/>
            <person name="Hata H."/>
            <person name="Watanabe M."/>
            <person name="Komatsu T."/>
            <person name="Mizushima-Sugano J."/>
            <person name="Satoh T."/>
            <person name="Shirai Y."/>
            <person name="Takahashi Y."/>
            <person name="Nakagawa K."/>
            <person name="Okumura K."/>
            <person name="Nagase T."/>
            <person name="Nomura N."/>
            <person name="Kikuchi H."/>
            <person name="Masuho Y."/>
            <person name="Yamashita R."/>
            <person name="Nakai K."/>
            <person name="Yada T."/>
            <person name="Nakamura Y."/>
            <person name="Ohara O."/>
            <person name="Isogai T."/>
            <person name="Sugano S."/>
        </authorList>
    </citation>
    <scope>NUCLEOTIDE SEQUENCE [LARGE SCALE MRNA]</scope>
    <source>
        <tissue>Mammary gland</tissue>
    </source>
</reference>
<reference key="9">
    <citation type="submission" date="2005-12" db="EMBL/GenBank/DDBJ databases">
        <authorList>
            <consortium name="NHLBI resequencing and genotyping service (RS&amp;G)"/>
        </authorList>
    </citation>
    <scope>NUCLEOTIDE SEQUENCE [GENOMIC DNA]</scope>
</reference>
<reference key="10">
    <citation type="journal article" date="2004" name="Nature">
        <title>The sequence and analysis of duplication-rich human chromosome 16.</title>
        <authorList>
            <person name="Martin J."/>
            <person name="Han C."/>
            <person name="Gordon L.A."/>
            <person name="Terry A."/>
            <person name="Prabhakar S."/>
            <person name="She X."/>
            <person name="Xie G."/>
            <person name="Hellsten U."/>
            <person name="Chan Y.M."/>
            <person name="Altherr M."/>
            <person name="Couronne O."/>
            <person name="Aerts A."/>
            <person name="Bajorek E."/>
            <person name="Black S."/>
            <person name="Blumer H."/>
            <person name="Branscomb E."/>
            <person name="Brown N.C."/>
            <person name="Bruno W.J."/>
            <person name="Buckingham J.M."/>
            <person name="Callen D.F."/>
            <person name="Campbell C.S."/>
            <person name="Campbell M.L."/>
            <person name="Campbell E.W."/>
            <person name="Caoile C."/>
            <person name="Challacombe J.F."/>
            <person name="Chasteen L.A."/>
            <person name="Chertkov O."/>
            <person name="Chi H.C."/>
            <person name="Christensen M."/>
            <person name="Clark L.M."/>
            <person name="Cohn J.D."/>
            <person name="Denys M."/>
            <person name="Detter J.C."/>
            <person name="Dickson M."/>
            <person name="Dimitrijevic-Bussod M."/>
            <person name="Escobar J."/>
            <person name="Fawcett J.J."/>
            <person name="Flowers D."/>
            <person name="Fotopulos D."/>
            <person name="Glavina T."/>
            <person name="Gomez M."/>
            <person name="Gonzales E."/>
            <person name="Goodstein D."/>
            <person name="Goodwin L.A."/>
            <person name="Grady D.L."/>
            <person name="Grigoriev I."/>
            <person name="Groza M."/>
            <person name="Hammon N."/>
            <person name="Hawkins T."/>
            <person name="Haydu L."/>
            <person name="Hildebrand C.E."/>
            <person name="Huang W."/>
            <person name="Israni S."/>
            <person name="Jett J."/>
            <person name="Jewett P.B."/>
            <person name="Kadner K."/>
            <person name="Kimball H."/>
            <person name="Kobayashi A."/>
            <person name="Krawczyk M.-C."/>
            <person name="Leyba T."/>
            <person name="Longmire J.L."/>
            <person name="Lopez F."/>
            <person name="Lou Y."/>
            <person name="Lowry S."/>
            <person name="Ludeman T."/>
            <person name="Manohar C.F."/>
            <person name="Mark G.A."/>
            <person name="McMurray K.L."/>
            <person name="Meincke L.J."/>
            <person name="Morgan J."/>
            <person name="Moyzis R.K."/>
            <person name="Mundt M.O."/>
            <person name="Munk A.C."/>
            <person name="Nandkeshwar R.D."/>
            <person name="Pitluck S."/>
            <person name="Pollard M."/>
            <person name="Predki P."/>
            <person name="Parson-Quintana B."/>
            <person name="Ramirez L."/>
            <person name="Rash S."/>
            <person name="Retterer J."/>
            <person name="Ricke D.O."/>
            <person name="Robinson D.L."/>
            <person name="Rodriguez A."/>
            <person name="Salamov A."/>
            <person name="Saunders E.H."/>
            <person name="Scott D."/>
            <person name="Shough T."/>
            <person name="Stallings R.L."/>
            <person name="Stalvey M."/>
            <person name="Sutherland R.D."/>
            <person name="Tapia R."/>
            <person name="Tesmer J.G."/>
            <person name="Thayer N."/>
            <person name="Thompson L.S."/>
            <person name="Tice H."/>
            <person name="Torney D.C."/>
            <person name="Tran-Gyamfi M."/>
            <person name="Tsai M."/>
            <person name="Ulanovsky L.E."/>
            <person name="Ustaszewska A."/>
            <person name="Vo N."/>
            <person name="White P.S."/>
            <person name="Williams A.L."/>
            <person name="Wills P.L."/>
            <person name="Wu J.-R."/>
            <person name="Wu K."/>
            <person name="Yang J."/>
            <person name="DeJong P."/>
            <person name="Bruce D."/>
            <person name="Doggett N.A."/>
            <person name="Deaven L."/>
            <person name="Schmutz J."/>
            <person name="Grimwood J."/>
            <person name="Richardson P."/>
            <person name="Rokhsar D.S."/>
            <person name="Eichler E.E."/>
            <person name="Gilna P."/>
            <person name="Lucas S.M."/>
            <person name="Myers R.M."/>
            <person name="Rubin E.M."/>
            <person name="Pennacchio L.A."/>
        </authorList>
    </citation>
    <scope>NUCLEOTIDE SEQUENCE [LARGE SCALE GENOMIC DNA]</scope>
</reference>
<reference key="11">
    <citation type="journal article" date="2004" name="Genome Res.">
        <title>The status, quality, and expansion of the NIH full-length cDNA project: the Mammalian Gene Collection (MGC).</title>
        <authorList>
            <consortium name="The MGC Project Team"/>
        </authorList>
    </citation>
    <scope>NUCLEOTIDE SEQUENCE [LARGE SCALE MRNA] (ALLELES HP*1F AND HP*1S)</scope>
    <source>
        <tissue>Liver</tissue>
    </source>
</reference>
<reference key="12">
    <citation type="journal article" date="1986" name="DNA">
        <title>Expression of cloned human haptoglobin and alpha 1-antitrypsin complementary DNAs in Saccharomyces cerevisiae.</title>
        <authorList>
            <person name="van der Straten A."/>
            <person name="Falque J.-C."/>
            <person name="Loriau R."/>
            <person name="Bollen A."/>
            <person name="Cabezon T."/>
        </authorList>
    </citation>
    <scope>NUCLEOTIDE SEQUENCE [MRNA] OF 1-19</scope>
</reference>
<reference key="13">
    <citation type="journal article" date="1983" name="Nucleic Acids Res.">
        <title>Sequence of human haptoglobin cDNA: evidence that the alpha and beta subunits are coded by the same mRNA.</title>
        <authorList>
            <person name="Raugei G."/>
            <person name="Bensi G."/>
            <person name="Colantuoni V."/>
            <person name="Romano V."/>
            <person name="Santoro C."/>
            <person name="Costanzo F."/>
            <person name="Cortese R."/>
        </authorList>
    </citation>
    <scope>NUCLEOTIDE SEQUENCE [MRNA] OF 3-406</scope>
</reference>
<reference key="14">
    <citation type="journal article" date="1999" name="Genomics">
        <title>Genome duplications and other features in 12 Mb of DNA sequence from human chromosome 16p and 16q.</title>
        <authorList>
            <person name="Loftus B.J."/>
            <person name="Kim U.-J."/>
            <person name="Sneddon V.P."/>
            <person name="Kalush F."/>
            <person name="Brandon R."/>
            <person name="Fuhrmann J."/>
            <person name="Mason T."/>
            <person name="Crosby M.L."/>
            <person name="Barnstead M."/>
            <person name="Cronin L."/>
            <person name="Mays A.D."/>
            <person name="Cao Y."/>
            <person name="Xu R.X."/>
            <person name="Kang H.-L."/>
            <person name="Mitchell S."/>
            <person name="Eichler E.E."/>
            <person name="Harris P.C."/>
            <person name="Venter J.C."/>
            <person name="Adams M.D."/>
        </authorList>
    </citation>
    <scope>NUCLEOTIDE SEQUENCE [LARGE SCALE GENOMIC DNA] OF 3-406</scope>
</reference>
<reference key="15">
    <citation type="journal article" date="1984" name="Nature">
        <title>Duplication within the haptoglobin Hp2 gene.</title>
        <authorList>
            <person name="Maeda N."/>
            <person name="Yang F."/>
            <person name="Barnett D.R."/>
            <person name="Bowman B.H."/>
            <person name="Smithies O."/>
        </authorList>
    </citation>
    <scope>NUCLEOTIDE SEQUENCE [GENOMIC DNA] OF 3-375</scope>
</reference>
<reference key="16">
    <citation type="journal article" date="1980" name="Proc. Natl. Acad. Sci. U.S.A.">
        <title>Covalent structure of human haptoglobin: a serine protease homolog.</title>
        <authorList>
            <person name="Kurosky A."/>
            <person name="Barnett D.R."/>
            <person name="Lee T.-H."/>
            <person name="Touchstone B."/>
            <person name="Hay R.E."/>
            <person name="Arnott M.S."/>
            <person name="Bowman B.H."/>
            <person name="Fitch W.M."/>
        </authorList>
    </citation>
    <scope>PROTEIN SEQUENCE OF 19-28; 88-160 AND 162-406</scope>
    <scope>DISULFIDE BONDS</scope>
</reference>
<reference key="17">
    <citation type="journal article" date="1995" name="Lab. Invest.">
        <title>Protein analysis of human maculae in relation to age-related maculopathy.</title>
        <authorList>
            <person name="Kliffen M."/>
            <person name="de Jong P.T.V.M."/>
            <person name="Luider T.M."/>
        </authorList>
    </citation>
    <scope>PROTEIN SEQUENCE OF 162-176</scope>
    <source>
        <tissue>Eye</tissue>
    </source>
</reference>
<reference key="18">
    <citation type="journal article" date="1973" name="Can. J. Biochem.">
        <title>Studies on the interchain disulfides of human haptoglobins.</title>
        <authorList>
            <person name="Malchy B."/>
            <person name="Dixon G.H."/>
        </authorList>
    </citation>
    <scope>DISULFIDE BONDS</scope>
</reference>
<reference key="19">
    <citation type="journal article" date="2003" name="Nat. Biotechnol.">
        <title>Identification and quantification of N-linked glycoproteins using hydrazide chemistry, stable isotope labeling and mass spectrometry.</title>
        <authorList>
            <person name="Zhang H."/>
            <person name="Li X.-J."/>
            <person name="Martin D.B."/>
            <person name="Aebersold R."/>
        </authorList>
    </citation>
    <scope>GLYCOSYLATION AT ASN-207 AND ASN-241</scope>
    <source>
        <tissue>Plasma</tissue>
        <tissue>Serum</tissue>
    </source>
</reference>
<reference key="20">
    <citation type="journal article" date="2004" name="Proteomics">
        <title>Screening for N-glycosylated proteins by liquid chromatography mass spectrometry.</title>
        <authorList>
            <person name="Bunkenborg J."/>
            <person name="Pilch B.J."/>
            <person name="Podtelejnikov A.V."/>
            <person name="Wisniewski J.R."/>
        </authorList>
    </citation>
    <scope>GLYCOSYLATION [LARGE SCALE ANALYSIS] AT ASN-184; ASN-207; ASN-211 AND ASN-241</scope>
    <source>
        <tissue>Plasma</tissue>
    </source>
</reference>
<reference key="21">
    <citation type="journal article" date="2005" name="J. Proteome Res.">
        <title>Human plasma N-glycoproteome analysis by immunoaffinity subtraction, hydrazide chemistry, and mass spectrometry.</title>
        <authorList>
            <person name="Liu T."/>
            <person name="Qian W.-J."/>
            <person name="Gritsenko M.A."/>
            <person name="Camp D.G. II"/>
            <person name="Monroe M.E."/>
            <person name="Moore R.J."/>
            <person name="Smith R.D."/>
        </authorList>
    </citation>
    <scope>GLYCOSYLATION [LARGE SCALE ANALYSIS] AT ASN-184; ASN-207; ASN-211 AND ASN-241</scope>
    <source>
        <tissue>Plasma</tissue>
    </source>
</reference>
<reference key="22">
    <citation type="journal article" date="2006" name="J. Proteome Res.">
        <title>Identification of N-linked glycoproteins in human saliva by glycoprotein capture and mass spectrometry.</title>
        <authorList>
            <person name="Ramachandran P."/>
            <person name="Boontheung P."/>
            <person name="Xie Y."/>
            <person name="Sondej M."/>
            <person name="Wong D.T."/>
            <person name="Loo J.A."/>
        </authorList>
    </citation>
    <scope>GLYCOSYLATION [LARGE SCALE ANALYSIS] AT ASN-207 AND ASN-211</scope>
    <source>
        <tissue>Saliva</tissue>
    </source>
</reference>
<reference key="23">
    <citation type="journal article" date="2009" name="J. Proteome Res.">
        <title>Glycoproteomics analysis of human liver tissue by combination of multiple enzyme digestion and hydrazide chemistry.</title>
        <authorList>
            <person name="Chen R."/>
            <person name="Jiang X."/>
            <person name="Sun D."/>
            <person name="Han G."/>
            <person name="Wang F."/>
            <person name="Ye M."/>
            <person name="Wang L."/>
            <person name="Zou H."/>
        </authorList>
    </citation>
    <scope>GLYCOSYLATION [LARGE SCALE ANALYSIS] AT ASN-184; ASN-207; ASN-211 AND ASN-241</scope>
    <source>
        <tissue>Liver</tissue>
    </source>
</reference>
<reference key="24">
    <citation type="journal article" date="2009" name="Mol. Cell. Proteomics">
        <title>A strategy for precise and large scale identification of core fucosylated glycoproteins.</title>
        <authorList>
            <person name="Jia W."/>
            <person name="Lu Z."/>
            <person name="Fu Y."/>
            <person name="Wang H.P."/>
            <person name="Wang L.H."/>
            <person name="Chi H."/>
            <person name="Yuan Z.F."/>
            <person name="Zheng Z.B."/>
            <person name="Song L.N."/>
            <person name="Han H.H."/>
            <person name="Liang Y.M."/>
            <person name="Wang J.L."/>
            <person name="Cai Y."/>
            <person name="Zhang Y.K."/>
            <person name="Deng Y.L."/>
            <person name="Ying W.T."/>
            <person name="He S.M."/>
            <person name="Qian X.H."/>
        </authorList>
    </citation>
    <scope>GLYCOSYLATION AT ASN-184 AND ASN-241</scope>
</reference>
<reference key="25">
    <citation type="journal article" date="2009" name="Nat. Methods">
        <title>Enrichment of glycopeptides for glycan structure and attachment site identification.</title>
        <authorList>
            <person name="Nilsson J."/>
            <person name="Rueetschi U."/>
            <person name="Halim A."/>
            <person name="Hesse C."/>
            <person name="Carlsohn E."/>
            <person name="Brinkmalm G."/>
            <person name="Larson G."/>
        </authorList>
    </citation>
    <scope>GLYCOSYLATION [LARGE SCALE ANALYSIS] AT ASN-241</scope>
    <scope>STRUCTURE OF CARBOHYDRATE</scope>
    <source>
        <tissue>Cerebrospinal fluid</tissue>
    </source>
</reference>
<reference key="26">
    <citation type="journal article" date="2009" name="Proc. Natl. Acad. Sci. U.S.A.">
        <title>Identification of human zonulin, a physiological modulator of tight junctions, as prehaptoglobin-2.</title>
        <authorList>
            <person name="Tripathi A."/>
            <person name="Lammers K.M."/>
            <person name="Goldblum S."/>
            <person name="Shea-Donohue T."/>
            <person name="Netzel-Arnett S."/>
            <person name="Buzza M.S."/>
            <person name="Antalis T.M."/>
            <person name="Vogel S.N."/>
            <person name="Zhao A."/>
            <person name="Yang S."/>
            <person name="Arrietta M.C."/>
            <person name="Meddings J.B."/>
            <person name="Fasano A."/>
        </authorList>
    </citation>
    <scope>IDENTIFICATION AS ZONULIN</scope>
</reference>
<reference key="27">
    <citation type="journal article" date="2010" name="Antioxid. Redox Signal.">
        <title>Haptoglobin: basic and clinical aspects.</title>
        <authorList>
            <person name="Levy A.P."/>
            <person name="Asleh R."/>
            <person name="Blum S."/>
            <person name="Levy N.S."/>
            <person name="Miller-Lotan R."/>
            <person name="Kalet-Litman S."/>
            <person name="Anbinder Y."/>
            <person name="Lache O."/>
            <person name="Nakhoul F.M."/>
            <person name="Asaf R."/>
            <person name="Farbstein D."/>
            <person name="Pollak M."/>
            <person name="Soloveichik Y.Z."/>
            <person name="Strauss M."/>
            <person name="Alshiek J."/>
            <person name="Livshits A."/>
            <person name="Schwartz A."/>
            <person name="Awad H."/>
            <person name="Jad K."/>
            <person name="Goldenstein H."/>
        </authorList>
    </citation>
    <scope>REVIEW</scope>
</reference>
<reference key="28">
    <citation type="journal article" date="2011" name="BMC Syst. Biol.">
        <title>Initial characterization of the human central proteome.</title>
        <authorList>
            <person name="Burkard T.R."/>
            <person name="Planyavsky M."/>
            <person name="Kaupe I."/>
            <person name="Breitwieser F.P."/>
            <person name="Buerckstuemmer T."/>
            <person name="Bennett K.L."/>
            <person name="Superti-Furga G."/>
            <person name="Colinge J."/>
        </authorList>
    </citation>
    <scope>IDENTIFICATION BY MASS SPECTROMETRY [LARGE SCALE ANALYSIS]</scope>
</reference>
<reference key="29">
    <citation type="journal article" date="2011" name="Physiol. Rev.">
        <title>Zonulin and its regulation of intestinal barrier function: the biological door to inflammation, autoimmunity, and cancer.</title>
        <authorList>
            <person name="Fasano A."/>
        </authorList>
    </citation>
    <scope>FUNCTION OF ZONULIN</scope>
</reference>
<reference key="30">
    <citation type="journal article" date="2012" name="J. Proteome Res.">
        <title>Resveratrol-induced changes of the human adipocyte secretion profile.</title>
        <authorList>
            <person name="Rosenow A."/>
            <person name="Noben J.P."/>
            <person name="Jocken J."/>
            <person name="Kallendrusch S."/>
            <person name="Fischer-Posovszky P."/>
            <person name="Mariman E.C."/>
            <person name="Renes J."/>
        </authorList>
    </citation>
    <scope>IDENTIFICATION BY MASS SPECTROMETRY [LARGE SCALE ANALYSIS]</scope>
</reference>
<reference key="31">
    <citation type="journal article" date="2014" name="J. Proteomics">
        <title>An enzyme assisted RP-RPLC approach for in-depth analysis of human liver phosphoproteome.</title>
        <authorList>
            <person name="Bian Y."/>
            <person name="Song C."/>
            <person name="Cheng K."/>
            <person name="Dong M."/>
            <person name="Wang F."/>
            <person name="Huang J."/>
            <person name="Sun D."/>
            <person name="Wang L."/>
            <person name="Ye M."/>
            <person name="Zou H."/>
        </authorList>
    </citation>
    <scope>IDENTIFICATION BY MASS SPECTROMETRY [LARGE SCALE ANALYSIS]</scope>
    <source>
        <tissue>Liver</tissue>
    </source>
</reference>
<reference key="32">
    <citation type="journal article" date="2019" name="J. Biol. Chem.">
        <title>The E3 ubiquitin ligase MARCH2 regulates ERGIC3-dependent trafficking of secretory proteins.</title>
        <authorList>
            <person name="Yoo W."/>
            <person name="Cho E.B."/>
            <person name="Kim S."/>
            <person name="Yoon J.B."/>
        </authorList>
    </citation>
    <scope>INTERACTION WITH ERGIC3</scope>
</reference>
<reference key="33">
    <citation type="journal article" date="2004" name="Hum. Genet.">
        <title>A novel I247T missense mutation in the haptoglobin 2 beta-chain decreases the expression of the protein and is associated with ahaptoglobinemia.</title>
        <authorList>
            <person name="Teye K."/>
            <person name="Quaye I.K."/>
            <person name="Koda Y."/>
            <person name="Soejima M."/>
            <person name="Pang H."/>
            <person name="Tsuneoka M."/>
            <person name="Amoah A.G."/>
            <person name="Adjei A."/>
            <person name="Kimura H."/>
        </authorList>
    </citation>
    <scope>VARIANT AHP THR-247</scope>
    <scope>CHARACTERIZATION OF VARIANT AHP THR-247</scope>
</reference>
<gene>
    <name type="primary">HP</name>
</gene>
<accession>P00738</accession>
<accession>B0AZL5</accession>
<accession>P00737</accession>
<accession>Q0VAC4</accession>
<accession>Q0VAC5</accession>
<accession>Q2PP15</accession>
<accession>Q3B7J0</accession>
<accession>Q6LBY9</accession>
<accession>Q9UC67</accession>
<evidence type="ECO:0000250" key="1"/>
<evidence type="ECO:0000250" key="2">
    <source>
        <dbReference type="UniProtKB" id="Q8SPS7"/>
    </source>
</evidence>
<evidence type="ECO:0000255" key="3">
    <source>
        <dbReference type="PROSITE-ProRule" id="PRU00274"/>
    </source>
</evidence>
<evidence type="ECO:0000255" key="4">
    <source>
        <dbReference type="PROSITE-ProRule" id="PRU00302"/>
    </source>
</evidence>
<evidence type="ECO:0000269" key="5">
    <source>
    </source>
</evidence>
<evidence type="ECO:0000269" key="6">
    <source>
    </source>
</evidence>
<evidence type="ECO:0000269" key="7">
    <source>
    </source>
</evidence>
<evidence type="ECO:0000269" key="8">
    <source>
    </source>
</evidence>
<evidence type="ECO:0000269" key="9">
    <source>
    </source>
</evidence>
<evidence type="ECO:0000269" key="10">
    <source>
    </source>
</evidence>
<evidence type="ECO:0000269" key="11">
    <source>
    </source>
</evidence>
<evidence type="ECO:0000269" key="12">
    <source>
    </source>
</evidence>
<evidence type="ECO:0000269" key="13">
    <source>
    </source>
</evidence>
<evidence type="ECO:0000269" key="14">
    <source>
    </source>
</evidence>
<evidence type="ECO:0000269" key="15">
    <source>
    </source>
</evidence>
<evidence type="ECO:0000269" key="16">
    <source>
    </source>
</evidence>
<evidence type="ECO:0000269" key="17">
    <source>
    </source>
</evidence>
<evidence type="ECO:0000269" key="18">
    <source>
    </source>
</evidence>
<evidence type="ECO:0000269" key="19">
    <source>
    </source>
</evidence>
<evidence type="ECO:0000305" key="20"/>
<evidence type="ECO:0007829" key="21">
    <source>
        <dbReference type="PDB" id="4WJG"/>
    </source>
</evidence>
<evidence type="ECO:0007829" key="22">
    <source>
        <dbReference type="PDB" id="4X0L"/>
    </source>
</evidence>
<evidence type="ECO:0007829" key="23">
    <source>
        <dbReference type="PDB" id="5HU6"/>
    </source>
</evidence>
<evidence type="ECO:0007829" key="24">
    <source>
        <dbReference type="PDB" id="6TB2"/>
    </source>
</evidence>
<proteinExistence type="evidence at protein level"/>